<organism>
    <name type="scientific">Bacillus cereus (strain ATCC 14579 / DSM 31 / CCUG 7414 / JCM 2152 / NBRC 15305 / NCIMB 9373 / NCTC 2599 / NRRL B-3711)</name>
    <dbReference type="NCBI Taxonomy" id="226900"/>
    <lineage>
        <taxon>Bacteria</taxon>
        <taxon>Bacillati</taxon>
        <taxon>Bacillota</taxon>
        <taxon>Bacilli</taxon>
        <taxon>Bacillales</taxon>
        <taxon>Bacillaceae</taxon>
        <taxon>Bacillus</taxon>
        <taxon>Bacillus cereus group</taxon>
    </lineage>
</organism>
<evidence type="ECO:0000255" key="1">
    <source>
        <dbReference type="HAMAP-Rule" id="MF_00139"/>
    </source>
</evidence>
<evidence type="ECO:0000255" key="2">
    <source>
        <dbReference type="PROSITE-ProRule" id="PRU01202"/>
    </source>
</evidence>
<accession>Q81IP9</accession>
<name>PUR9_BACCR</name>
<keyword id="KW-0378">Hydrolase</keyword>
<keyword id="KW-0511">Multifunctional enzyme</keyword>
<keyword id="KW-0658">Purine biosynthesis</keyword>
<keyword id="KW-1185">Reference proteome</keyword>
<keyword id="KW-0808">Transferase</keyword>
<dbReference type="EC" id="2.1.2.3" evidence="1"/>
<dbReference type="EC" id="3.5.4.10" evidence="1"/>
<dbReference type="EMBL" id="AE016877">
    <property type="protein sequence ID" value="AAP07373.1"/>
    <property type="molecule type" value="Genomic_DNA"/>
</dbReference>
<dbReference type="RefSeq" id="NP_830172.1">
    <property type="nucleotide sequence ID" value="NC_004722.1"/>
</dbReference>
<dbReference type="RefSeq" id="WP_000745439.1">
    <property type="nucleotide sequence ID" value="NZ_CP138336.1"/>
</dbReference>
<dbReference type="SMR" id="Q81IP9"/>
<dbReference type="STRING" id="226900.BC_0333"/>
<dbReference type="KEGG" id="bce:BC0333"/>
<dbReference type="PATRIC" id="fig|226900.8.peg.305"/>
<dbReference type="HOGENOM" id="CLU_016316_5_2_9"/>
<dbReference type="OrthoDB" id="9802065at2"/>
<dbReference type="UniPathway" id="UPA00074">
    <property type="reaction ID" value="UER00133"/>
</dbReference>
<dbReference type="UniPathway" id="UPA00074">
    <property type="reaction ID" value="UER00135"/>
</dbReference>
<dbReference type="Proteomes" id="UP000001417">
    <property type="component" value="Chromosome"/>
</dbReference>
<dbReference type="GO" id="GO:0005829">
    <property type="term" value="C:cytosol"/>
    <property type="evidence" value="ECO:0000318"/>
    <property type="project" value="GO_Central"/>
</dbReference>
<dbReference type="GO" id="GO:0003937">
    <property type="term" value="F:IMP cyclohydrolase activity"/>
    <property type="evidence" value="ECO:0000318"/>
    <property type="project" value="GO_Central"/>
</dbReference>
<dbReference type="GO" id="GO:0004643">
    <property type="term" value="F:phosphoribosylaminoimidazolecarboxamide formyltransferase activity"/>
    <property type="evidence" value="ECO:0000318"/>
    <property type="project" value="GO_Central"/>
</dbReference>
<dbReference type="GO" id="GO:0006189">
    <property type="term" value="P:'de novo' IMP biosynthetic process"/>
    <property type="evidence" value="ECO:0000318"/>
    <property type="project" value="GO_Central"/>
</dbReference>
<dbReference type="CDD" id="cd01421">
    <property type="entry name" value="IMPCH"/>
    <property type="match status" value="1"/>
</dbReference>
<dbReference type="FunFam" id="3.40.140.20:FF:000001">
    <property type="entry name" value="Bifunctional purine biosynthesis protein PurH"/>
    <property type="match status" value="1"/>
</dbReference>
<dbReference type="FunFam" id="3.40.140.20:FF:000002">
    <property type="entry name" value="Bifunctional purine biosynthesis protein PurH"/>
    <property type="match status" value="1"/>
</dbReference>
<dbReference type="FunFam" id="3.40.50.1380:FF:000001">
    <property type="entry name" value="Bifunctional purine biosynthesis protein PurH"/>
    <property type="match status" value="1"/>
</dbReference>
<dbReference type="Gene3D" id="3.40.140.20">
    <property type="match status" value="2"/>
</dbReference>
<dbReference type="Gene3D" id="3.40.50.1380">
    <property type="entry name" value="Methylglyoxal synthase-like domain"/>
    <property type="match status" value="1"/>
</dbReference>
<dbReference type="HAMAP" id="MF_00139">
    <property type="entry name" value="PurH"/>
    <property type="match status" value="1"/>
</dbReference>
<dbReference type="InterPro" id="IPR024051">
    <property type="entry name" value="AICAR_Tfase_dup_dom_sf"/>
</dbReference>
<dbReference type="InterPro" id="IPR016193">
    <property type="entry name" value="Cytidine_deaminase-like"/>
</dbReference>
<dbReference type="InterPro" id="IPR011607">
    <property type="entry name" value="MGS-like_dom"/>
</dbReference>
<dbReference type="InterPro" id="IPR036914">
    <property type="entry name" value="MGS-like_dom_sf"/>
</dbReference>
<dbReference type="InterPro" id="IPR002695">
    <property type="entry name" value="PurH-like"/>
</dbReference>
<dbReference type="NCBIfam" id="NF002049">
    <property type="entry name" value="PRK00881.1"/>
    <property type="match status" value="1"/>
</dbReference>
<dbReference type="NCBIfam" id="TIGR00355">
    <property type="entry name" value="purH"/>
    <property type="match status" value="1"/>
</dbReference>
<dbReference type="PANTHER" id="PTHR11692:SF0">
    <property type="entry name" value="BIFUNCTIONAL PURINE BIOSYNTHESIS PROTEIN ATIC"/>
    <property type="match status" value="1"/>
</dbReference>
<dbReference type="PANTHER" id="PTHR11692">
    <property type="entry name" value="BIFUNCTIONAL PURINE BIOSYNTHESIS PROTEIN PURH"/>
    <property type="match status" value="1"/>
</dbReference>
<dbReference type="Pfam" id="PF01808">
    <property type="entry name" value="AICARFT_IMPCHas"/>
    <property type="match status" value="1"/>
</dbReference>
<dbReference type="Pfam" id="PF02142">
    <property type="entry name" value="MGS"/>
    <property type="match status" value="1"/>
</dbReference>
<dbReference type="PIRSF" id="PIRSF000414">
    <property type="entry name" value="AICARFT_IMPCHas"/>
    <property type="match status" value="1"/>
</dbReference>
<dbReference type="SMART" id="SM00798">
    <property type="entry name" value="AICARFT_IMPCHas"/>
    <property type="match status" value="1"/>
</dbReference>
<dbReference type="SMART" id="SM00851">
    <property type="entry name" value="MGS"/>
    <property type="match status" value="1"/>
</dbReference>
<dbReference type="SUPFAM" id="SSF53927">
    <property type="entry name" value="Cytidine deaminase-like"/>
    <property type="match status" value="1"/>
</dbReference>
<dbReference type="SUPFAM" id="SSF52335">
    <property type="entry name" value="Methylglyoxal synthase-like"/>
    <property type="match status" value="1"/>
</dbReference>
<dbReference type="PROSITE" id="PS51855">
    <property type="entry name" value="MGS"/>
    <property type="match status" value="1"/>
</dbReference>
<comment type="catalytic activity">
    <reaction evidence="1">
        <text>(6R)-10-formyltetrahydrofolate + 5-amino-1-(5-phospho-beta-D-ribosyl)imidazole-4-carboxamide = 5-formamido-1-(5-phospho-D-ribosyl)imidazole-4-carboxamide + (6S)-5,6,7,8-tetrahydrofolate</text>
        <dbReference type="Rhea" id="RHEA:22192"/>
        <dbReference type="ChEBI" id="CHEBI:57453"/>
        <dbReference type="ChEBI" id="CHEBI:58467"/>
        <dbReference type="ChEBI" id="CHEBI:58475"/>
        <dbReference type="ChEBI" id="CHEBI:195366"/>
        <dbReference type="EC" id="2.1.2.3"/>
    </reaction>
</comment>
<comment type="catalytic activity">
    <reaction evidence="1">
        <text>IMP + H2O = 5-formamido-1-(5-phospho-D-ribosyl)imidazole-4-carboxamide</text>
        <dbReference type="Rhea" id="RHEA:18445"/>
        <dbReference type="ChEBI" id="CHEBI:15377"/>
        <dbReference type="ChEBI" id="CHEBI:58053"/>
        <dbReference type="ChEBI" id="CHEBI:58467"/>
        <dbReference type="EC" id="3.5.4.10"/>
    </reaction>
</comment>
<comment type="pathway">
    <text evidence="1">Purine metabolism; IMP biosynthesis via de novo pathway; 5-formamido-1-(5-phospho-D-ribosyl)imidazole-4-carboxamide from 5-amino-1-(5-phospho-D-ribosyl)imidazole-4-carboxamide (10-formyl THF route): step 1/1.</text>
</comment>
<comment type="pathway">
    <text evidence="1">Purine metabolism; IMP biosynthesis via de novo pathway; IMP from 5-formamido-1-(5-phospho-D-ribosyl)imidazole-4-carboxamide: step 1/1.</text>
</comment>
<comment type="domain">
    <text evidence="1">The IMP cyclohydrolase activity resides in the N-terminal region.</text>
</comment>
<comment type="similarity">
    <text evidence="1">Belongs to the PurH family.</text>
</comment>
<protein>
    <recommendedName>
        <fullName evidence="1">Bifunctional purine biosynthesis protein PurH</fullName>
    </recommendedName>
    <domain>
        <recommendedName>
            <fullName evidence="1">Phosphoribosylaminoimidazolecarboxamide formyltransferase</fullName>
            <ecNumber evidence="1">2.1.2.3</ecNumber>
        </recommendedName>
        <alternativeName>
            <fullName evidence="1">AICAR transformylase</fullName>
        </alternativeName>
    </domain>
    <domain>
        <recommendedName>
            <fullName evidence="1">IMP cyclohydrolase</fullName>
            <ecNumber evidence="1">3.5.4.10</ecNumber>
        </recommendedName>
        <alternativeName>
            <fullName evidence="1">ATIC</fullName>
        </alternativeName>
        <alternativeName>
            <fullName evidence="1">IMP synthase</fullName>
        </alternativeName>
        <alternativeName>
            <fullName evidence="1">Inosinicase</fullName>
        </alternativeName>
    </domain>
</protein>
<gene>
    <name evidence="1" type="primary">purH</name>
    <name type="ordered locus">BC_0333</name>
</gene>
<reference key="1">
    <citation type="journal article" date="2003" name="Nature">
        <title>Genome sequence of Bacillus cereus and comparative analysis with Bacillus anthracis.</title>
        <authorList>
            <person name="Ivanova N."/>
            <person name="Sorokin A."/>
            <person name="Anderson I."/>
            <person name="Galleron N."/>
            <person name="Candelon B."/>
            <person name="Kapatral V."/>
            <person name="Bhattacharyya A."/>
            <person name="Reznik G."/>
            <person name="Mikhailova N."/>
            <person name="Lapidus A."/>
            <person name="Chu L."/>
            <person name="Mazur M."/>
            <person name="Goltsman E."/>
            <person name="Larsen N."/>
            <person name="D'Souza M."/>
            <person name="Walunas T."/>
            <person name="Grechkin Y."/>
            <person name="Pusch G."/>
            <person name="Haselkorn R."/>
            <person name="Fonstein M."/>
            <person name="Ehrlich S.D."/>
            <person name="Overbeek R."/>
            <person name="Kyrpides N.C."/>
        </authorList>
    </citation>
    <scope>NUCLEOTIDE SEQUENCE [LARGE SCALE GENOMIC DNA]</scope>
    <source>
        <strain>ATCC 14579 / DSM 31 / CCUG 7414 / JCM 2152 / NBRC 15305 / NCIMB 9373 / NCTC 2599 / NRRL B-3711</strain>
    </source>
</reference>
<sequence>MKKRALVSVSDKTGVVEFVKGLLEQGIEVISTGGTKKLLEENGLQVIGISEVTGFPEIMDGRVKTLHPNIHGGLLAVRDNETHVTQMNELGMEPIDFVVVNLYPFKETIAKPDVTFADAIENIDIGGPTMIRSAAKNHKFVSVIVDPVDYDIVLAELKENGEVAEETKRKLAAKVFRHTAAYDALISNYLTEQMGEESPETLTVTFEKKQDLRYGENPHQKATFYKAPFAATSSVAYAEQLHGKELSYNNINDADAALSIVKEFTEPAVVAVKHMNPCGVGVGTDIHEAYTRAYEADPVSIFGGIIAANREIDKATAEKLHEIFLEIVIAPSFSQEALEVLQSKKNLRLLTINIEKATSASKKLTSVQGGLLVQEEDTLSLDESTISIPTKREPSEQEWKDLKLAWKVVKHVKSNAIVLAKDDMTIGVGAGQMNRVGSAKIAITQAGEKAQGSALASDAFFPMPDTLEEAAKAGITAIIQPGGSIRDEDSIKVADTYGIAMVFTGVRHFKH</sequence>
<feature type="chain" id="PRO_1000018840" description="Bifunctional purine biosynthesis protein PurH">
    <location>
        <begin position="1"/>
        <end position="511"/>
    </location>
</feature>
<feature type="domain" description="MGS-like" evidence="2">
    <location>
        <begin position="1"/>
        <end position="145"/>
    </location>
</feature>
<proteinExistence type="inferred from homology"/>